<comment type="function">
    <text evidence="1">Catalyzes the transfer of pyrophosphate from adenosine triphosphate (ATP) to 6-hydroxymethyl-7,8-dihydropterin, an enzymatic step in folate biosynthesis pathway.</text>
</comment>
<comment type="catalytic activity">
    <reaction evidence="1">
        <text>6-hydroxymethyl-7,8-dihydropterin + ATP = (7,8-dihydropterin-6-yl)methyl diphosphate + AMP + H(+)</text>
        <dbReference type="Rhea" id="RHEA:11412"/>
        <dbReference type="ChEBI" id="CHEBI:15378"/>
        <dbReference type="ChEBI" id="CHEBI:30616"/>
        <dbReference type="ChEBI" id="CHEBI:44841"/>
        <dbReference type="ChEBI" id="CHEBI:72950"/>
        <dbReference type="ChEBI" id="CHEBI:456215"/>
        <dbReference type="EC" id="2.7.6.3"/>
    </reaction>
</comment>
<comment type="pathway">
    <text evidence="1">Cofactor biosynthesis; tetrahydrofolate biosynthesis; 2-amino-4-hydroxy-6-hydroxymethyl-7,8-dihydropteridine diphosphate from 7,8-dihydroneopterin triphosphate: step 4/4.</text>
</comment>
<comment type="similarity">
    <text evidence="2">Belongs to the HPPK family.</text>
</comment>
<accession>P9WNC7</accession>
<accession>L0TDA6</accession>
<accession>O06276</accession>
<accession>P64143</accession>
<dbReference type="EC" id="2.7.6.3" evidence="1"/>
<dbReference type="EMBL" id="AL123456">
    <property type="protein sequence ID" value="CCP46429.1"/>
    <property type="molecule type" value="Genomic_DNA"/>
</dbReference>
<dbReference type="PIR" id="G70955">
    <property type="entry name" value="G70955"/>
</dbReference>
<dbReference type="RefSeq" id="NP_218123.1">
    <property type="nucleotide sequence ID" value="NC_000962.3"/>
</dbReference>
<dbReference type="RefSeq" id="WP_003419536.1">
    <property type="nucleotide sequence ID" value="NZ_NVQJ01000056.1"/>
</dbReference>
<dbReference type="SMR" id="P9WNC7"/>
<dbReference type="FunCoup" id="P9WNC7">
    <property type="interactions" value="185"/>
</dbReference>
<dbReference type="STRING" id="83332.Rv3606c"/>
<dbReference type="PaxDb" id="83332-Rv3606c"/>
<dbReference type="DNASU" id="885848"/>
<dbReference type="GeneID" id="45427592"/>
<dbReference type="GeneID" id="885848"/>
<dbReference type="KEGG" id="mtu:Rv3606c"/>
<dbReference type="KEGG" id="mtv:RVBD_3606c"/>
<dbReference type="TubercuList" id="Rv3606c"/>
<dbReference type="eggNOG" id="COG0801">
    <property type="taxonomic scope" value="Bacteria"/>
</dbReference>
<dbReference type="InParanoid" id="P9WNC7"/>
<dbReference type="OrthoDB" id="9808041at2"/>
<dbReference type="PhylomeDB" id="P9WNC7"/>
<dbReference type="UniPathway" id="UPA00077">
    <property type="reaction ID" value="UER00155"/>
</dbReference>
<dbReference type="Proteomes" id="UP000001584">
    <property type="component" value="Chromosome"/>
</dbReference>
<dbReference type="GO" id="GO:0003848">
    <property type="term" value="F:2-amino-4-hydroxy-6-hydroxymethyldihydropteridine diphosphokinase activity"/>
    <property type="evidence" value="ECO:0007669"/>
    <property type="project" value="UniProtKB-EC"/>
</dbReference>
<dbReference type="GO" id="GO:0005524">
    <property type="term" value="F:ATP binding"/>
    <property type="evidence" value="ECO:0007669"/>
    <property type="project" value="UniProtKB-KW"/>
</dbReference>
<dbReference type="GO" id="GO:0016301">
    <property type="term" value="F:kinase activity"/>
    <property type="evidence" value="ECO:0007669"/>
    <property type="project" value="UniProtKB-KW"/>
</dbReference>
<dbReference type="GO" id="GO:0046656">
    <property type="term" value="P:folic acid biosynthetic process"/>
    <property type="evidence" value="ECO:0007669"/>
    <property type="project" value="UniProtKB-KW"/>
</dbReference>
<dbReference type="GO" id="GO:0046654">
    <property type="term" value="P:tetrahydrofolate biosynthetic process"/>
    <property type="evidence" value="ECO:0007669"/>
    <property type="project" value="UniProtKB-UniPathway"/>
</dbReference>
<dbReference type="CDD" id="cd00483">
    <property type="entry name" value="HPPK"/>
    <property type="match status" value="1"/>
</dbReference>
<dbReference type="Gene3D" id="3.30.70.560">
    <property type="entry name" value="7,8-Dihydro-6-hydroxymethylpterin-pyrophosphokinase HPPK"/>
    <property type="match status" value="1"/>
</dbReference>
<dbReference type="InterPro" id="IPR000550">
    <property type="entry name" value="Hppk"/>
</dbReference>
<dbReference type="InterPro" id="IPR035907">
    <property type="entry name" value="Hppk_sf"/>
</dbReference>
<dbReference type="NCBIfam" id="TIGR01498">
    <property type="entry name" value="folK"/>
    <property type="match status" value="1"/>
</dbReference>
<dbReference type="PANTHER" id="PTHR43071">
    <property type="entry name" value="2-AMINO-4-HYDROXY-6-HYDROXYMETHYLDIHYDROPTERIDINE PYROPHOSPHOKINASE"/>
    <property type="match status" value="1"/>
</dbReference>
<dbReference type="PANTHER" id="PTHR43071:SF1">
    <property type="entry name" value="2-AMINO-4-HYDROXY-6-HYDROXYMETHYLDIHYDROPTERIDINE PYROPHOSPHOKINASE"/>
    <property type="match status" value="1"/>
</dbReference>
<dbReference type="Pfam" id="PF01288">
    <property type="entry name" value="HPPK"/>
    <property type="match status" value="1"/>
</dbReference>
<dbReference type="SUPFAM" id="SSF55083">
    <property type="entry name" value="6-hydroxymethyl-7,8-dihydropterin pyrophosphokinase, HPPK"/>
    <property type="match status" value="1"/>
</dbReference>
<dbReference type="PROSITE" id="PS00794">
    <property type="entry name" value="HPPK"/>
    <property type="match status" value="1"/>
</dbReference>
<organism>
    <name type="scientific">Mycobacterium tuberculosis (strain ATCC 25618 / H37Rv)</name>
    <dbReference type="NCBI Taxonomy" id="83332"/>
    <lineage>
        <taxon>Bacteria</taxon>
        <taxon>Bacillati</taxon>
        <taxon>Actinomycetota</taxon>
        <taxon>Actinomycetes</taxon>
        <taxon>Mycobacteriales</taxon>
        <taxon>Mycobacteriaceae</taxon>
        <taxon>Mycobacterium</taxon>
        <taxon>Mycobacterium tuberculosis complex</taxon>
    </lineage>
</organism>
<protein>
    <recommendedName>
        <fullName evidence="1">2-amino-4-hydroxy-6-hydroxymethyldihydropteridine pyrophosphokinase</fullName>
        <ecNumber evidence="1">2.7.6.3</ecNumber>
    </recommendedName>
    <alternativeName>
        <fullName evidence="1">6-hydroxymethyl-7,8-dihydropterin pyrophosphokinase</fullName>
        <shortName evidence="1">PPPK</shortName>
    </alternativeName>
    <alternativeName>
        <fullName evidence="1">7,8-dihydro-6-hydroxymethylpterin-pyrophosphokinase</fullName>
        <shortName evidence="1">HPPK</shortName>
    </alternativeName>
</protein>
<sequence>MTRVVLSVGSNLGDRLARLRSVADGLGDALIAASPIYEADPWGGVEQGQFLNAVLIADDPTCEPREWLRRAQEFERAAGRVRGQRWGPRNLDVDLIACYQTSATEALVEVTARENHLTLPHPLAHLRAFVLIPWIAVDPTAQLTVAGCPRPVTRLLAELEPADRDSVRLFRPSFDLNSRHPVSRAPES</sequence>
<reference key="1">
    <citation type="journal article" date="1998" name="Nature">
        <title>Deciphering the biology of Mycobacterium tuberculosis from the complete genome sequence.</title>
        <authorList>
            <person name="Cole S.T."/>
            <person name="Brosch R."/>
            <person name="Parkhill J."/>
            <person name="Garnier T."/>
            <person name="Churcher C.M."/>
            <person name="Harris D.E."/>
            <person name="Gordon S.V."/>
            <person name="Eiglmeier K."/>
            <person name="Gas S."/>
            <person name="Barry C.E. III"/>
            <person name="Tekaia F."/>
            <person name="Badcock K."/>
            <person name="Basham D."/>
            <person name="Brown D."/>
            <person name="Chillingworth T."/>
            <person name="Connor R."/>
            <person name="Davies R.M."/>
            <person name="Devlin K."/>
            <person name="Feltwell T."/>
            <person name="Gentles S."/>
            <person name="Hamlin N."/>
            <person name="Holroyd S."/>
            <person name="Hornsby T."/>
            <person name="Jagels K."/>
            <person name="Krogh A."/>
            <person name="McLean J."/>
            <person name="Moule S."/>
            <person name="Murphy L.D."/>
            <person name="Oliver S."/>
            <person name="Osborne J."/>
            <person name="Quail M.A."/>
            <person name="Rajandream M.A."/>
            <person name="Rogers J."/>
            <person name="Rutter S."/>
            <person name="Seeger K."/>
            <person name="Skelton S."/>
            <person name="Squares S."/>
            <person name="Squares R."/>
            <person name="Sulston J.E."/>
            <person name="Taylor K."/>
            <person name="Whitehead S."/>
            <person name="Barrell B.G."/>
        </authorList>
    </citation>
    <scope>NUCLEOTIDE SEQUENCE [LARGE SCALE GENOMIC DNA]</scope>
    <source>
        <strain>ATCC 25618 / H37Rv</strain>
    </source>
</reference>
<reference key="2">
    <citation type="journal article" date="2011" name="Mol. Cell. Proteomics">
        <title>Proteogenomic analysis of Mycobacterium tuberculosis by high resolution mass spectrometry.</title>
        <authorList>
            <person name="Kelkar D.S."/>
            <person name="Kumar D."/>
            <person name="Kumar P."/>
            <person name="Balakrishnan L."/>
            <person name="Muthusamy B."/>
            <person name="Yadav A.K."/>
            <person name="Shrivastava P."/>
            <person name="Marimuthu A."/>
            <person name="Anand S."/>
            <person name="Sundaram H."/>
            <person name="Kingsbury R."/>
            <person name="Harsha H.C."/>
            <person name="Nair B."/>
            <person name="Prasad T.S."/>
            <person name="Chauhan D.S."/>
            <person name="Katoch K."/>
            <person name="Katoch V.M."/>
            <person name="Kumar P."/>
            <person name="Chaerkady R."/>
            <person name="Ramachandran S."/>
            <person name="Dash D."/>
            <person name="Pandey A."/>
        </authorList>
    </citation>
    <scope>IDENTIFICATION BY MASS SPECTROMETRY [LARGE SCALE ANALYSIS]</scope>
    <source>
        <strain>ATCC 25618 / H37Rv</strain>
    </source>
</reference>
<feature type="chain" id="PRO_0000168255" description="2-amino-4-hydroxy-6-hydroxymethyldihydropteridine pyrophosphokinase">
    <location>
        <begin position="1"/>
        <end position="188"/>
    </location>
</feature>
<keyword id="KW-0067">ATP-binding</keyword>
<keyword id="KW-0289">Folate biosynthesis</keyword>
<keyword id="KW-0418">Kinase</keyword>
<keyword id="KW-0547">Nucleotide-binding</keyword>
<keyword id="KW-1185">Reference proteome</keyword>
<keyword id="KW-0808">Transferase</keyword>
<evidence type="ECO:0000250" key="1">
    <source>
        <dbReference type="UniProtKB" id="P26281"/>
    </source>
</evidence>
<evidence type="ECO:0000305" key="2"/>
<gene>
    <name type="primary">folK</name>
    <name type="ordered locus">Rv3606c</name>
    <name type="ORF">MTCY07H7B.16</name>
</gene>
<proteinExistence type="evidence at protein level"/>
<name>HPPK_MYCTU</name>